<feature type="chain" id="PRO_0000153160" description="Glutamine synthetase">
    <location>
        <begin position="1"/>
        <end position="372"/>
    </location>
</feature>
<feature type="domain" description="GS beta-grasp" evidence="2">
    <location>
        <begin position="26"/>
        <end position="105"/>
    </location>
</feature>
<feature type="domain" description="GS catalytic" evidence="3">
    <location>
        <begin position="112"/>
        <end position="372"/>
    </location>
</feature>
<organism>
    <name type="scientific">Kluyveromyces lactis (strain ATCC 8585 / CBS 2359 / DSM 70799 / NBRC 1267 / NRRL Y-1140 / WM37)</name>
    <name type="common">Yeast</name>
    <name type="synonym">Candida sphaerica</name>
    <dbReference type="NCBI Taxonomy" id="284590"/>
    <lineage>
        <taxon>Eukaryota</taxon>
        <taxon>Fungi</taxon>
        <taxon>Dikarya</taxon>
        <taxon>Ascomycota</taxon>
        <taxon>Saccharomycotina</taxon>
        <taxon>Saccharomycetes</taxon>
        <taxon>Saccharomycetales</taxon>
        <taxon>Saccharomycetaceae</taxon>
        <taxon>Kluyveromyces</taxon>
    </lineage>
</organism>
<gene>
    <name type="primary">GLN1</name>
    <name type="ordered locus">KLLA0E06259g</name>
</gene>
<accession>Q874T6</accession>
<protein>
    <recommendedName>
        <fullName>Glutamine synthetase</fullName>
        <shortName>GS</shortName>
        <ecNumber>6.3.1.2</ecNumber>
    </recommendedName>
    <alternativeName>
        <fullName>Glutamate--ammonia ligase</fullName>
    </alternativeName>
</protein>
<keyword id="KW-0067">ATP-binding</keyword>
<keyword id="KW-0963">Cytoplasm</keyword>
<keyword id="KW-0436">Ligase</keyword>
<keyword id="KW-0547">Nucleotide-binding</keyword>
<keyword id="KW-1185">Reference proteome</keyword>
<comment type="catalytic activity">
    <reaction>
        <text>L-glutamate + NH4(+) + ATP = L-glutamine + ADP + phosphate + H(+)</text>
        <dbReference type="Rhea" id="RHEA:16169"/>
        <dbReference type="ChEBI" id="CHEBI:15378"/>
        <dbReference type="ChEBI" id="CHEBI:28938"/>
        <dbReference type="ChEBI" id="CHEBI:29985"/>
        <dbReference type="ChEBI" id="CHEBI:30616"/>
        <dbReference type="ChEBI" id="CHEBI:43474"/>
        <dbReference type="ChEBI" id="CHEBI:58359"/>
        <dbReference type="ChEBI" id="CHEBI:456216"/>
        <dbReference type="EC" id="6.3.1.2"/>
    </reaction>
</comment>
<comment type="subunit">
    <text evidence="1">Homooctamer.</text>
</comment>
<comment type="subcellular location">
    <subcellularLocation>
        <location evidence="1">Cytoplasm</location>
    </subcellularLocation>
</comment>
<comment type="similarity">
    <text evidence="4">Belongs to the glutamine synthetase family.</text>
</comment>
<proteinExistence type="inferred from homology"/>
<sequence>MAATSDIVEKTHILQKYLELDQRGAIIAEYVWIDSEGGLRSKGRTLNKKVTSVDSLPEWNFDGSSTGQAPGHDSDIYLKPVAFYPDPFRRGDNIVVLAECWNNDGTPNKFNHRHEAAKLFEAHKDAEMWFGLEQEYTLFDQYDQVYGWPKGGFPAPQGPYYCGVGAGKVFARDVIEAHYRACLYAGVNISGINAEVMPSQWEFQVGPCEGIAMADQLWIARYFLHRVAEEFGVKVSLHPKPLKGDWNGAGCHTNVSTKLMRAPGGMKYIEDAIEKLSKRHNEHIKLYGADNEQRLTGRHETASMSTFSSGVANRGASIRIPRSVNKEGYGYFEDRRPASNIDPYLVTGIMCETVCGAIENANMTKEYERESL</sequence>
<reference key="1">
    <citation type="journal article" date="2007" name="FEMS Yeast Res.">
        <title>A respiratory-deficient mutation associated with high salt sensitivity in Kluyveromyces lactis.</title>
        <authorList>
            <person name="Goffrini P."/>
        </authorList>
    </citation>
    <scope>NUCLEOTIDE SEQUENCE [GENOMIC DNA]</scope>
    <source>
        <strain>ATCC 8585 / CBS 2359 / DSM 70799 / NBRC 1267 / NRRL Y-1140 / WM37</strain>
    </source>
</reference>
<reference key="2">
    <citation type="journal article" date="2004" name="Nature">
        <title>Genome evolution in yeasts.</title>
        <authorList>
            <person name="Dujon B."/>
            <person name="Sherman D."/>
            <person name="Fischer G."/>
            <person name="Durrens P."/>
            <person name="Casaregola S."/>
            <person name="Lafontaine I."/>
            <person name="de Montigny J."/>
            <person name="Marck C."/>
            <person name="Neuveglise C."/>
            <person name="Talla E."/>
            <person name="Goffard N."/>
            <person name="Frangeul L."/>
            <person name="Aigle M."/>
            <person name="Anthouard V."/>
            <person name="Babour A."/>
            <person name="Barbe V."/>
            <person name="Barnay S."/>
            <person name="Blanchin S."/>
            <person name="Beckerich J.-M."/>
            <person name="Beyne E."/>
            <person name="Bleykasten C."/>
            <person name="Boisrame A."/>
            <person name="Boyer J."/>
            <person name="Cattolico L."/>
            <person name="Confanioleri F."/>
            <person name="de Daruvar A."/>
            <person name="Despons L."/>
            <person name="Fabre E."/>
            <person name="Fairhead C."/>
            <person name="Ferry-Dumazet H."/>
            <person name="Groppi A."/>
            <person name="Hantraye F."/>
            <person name="Hennequin C."/>
            <person name="Jauniaux N."/>
            <person name="Joyet P."/>
            <person name="Kachouri R."/>
            <person name="Kerrest A."/>
            <person name="Koszul R."/>
            <person name="Lemaire M."/>
            <person name="Lesur I."/>
            <person name="Ma L."/>
            <person name="Muller H."/>
            <person name="Nicaud J.-M."/>
            <person name="Nikolski M."/>
            <person name="Oztas S."/>
            <person name="Ozier-Kalogeropoulos O."/>
            <person name="Pellenz S."/>
            <person name="Potier S."/>
            <person name="Richard G.-F."/>
            <person name="Straub M.-L."/>
            <person name="Suleau A."/>
            <person name="Swennen D."/>
            <person name="Tekaia F."/>
            <person name="Wesolowski-Louvel M."/>
            <person name="Westhof E."/>
            <person name="Wirth B."/>
            <person name="Zeniou-Meyer M."/>
            <person name="Zivanovic Y."/>
            <person name="Bolotin-Fukuhara M."/>
            <person name="Thierry A."/>
            <person name="Bouchier C."/>
            <person name="Caudron B."/>
            <person name="Scarpelli C."/>
            <person name="Gaillardin C."/>
            <person name="Weissenbach J."/>
            <person name="Wincker P."/>
            <person name="Souciet J.-L."/>
        </authorList>
    </citation>
    <scope>NUCLEOTIDE SEQUENCE [LARGE SCALE GENOMIC DNA]</scope>
    <source>
        <strain>ATCC 8585 / CBS 2359 / DSM 70799 / NBRC 1267 / NRRL Y-1140 / WM37</strain>
    </source>
</reference>
<evidence type="ECO:0000250" key="1"/>
<evidence type="ECO:0000255" key="2">
    <source>
        <dbReference type="PROSITE-ProRule" id="PRU01330"/>
    </source>
</evidence>
<evidence type="ECO:0000255" key="3">
    <source>
        <dbReference type="PROSITE-ProRule" id="PRU01331"/>
    </source>
</evidence>
<evidence type="ECO:0000305" key="4"/>
<name>GLNA_KLULA</name>
<dbReference type="EC" id="6.3.1.2"/>
<dbReference type="EMBL" id="AJ547613">
    <property type="protein sequence ID" value="CAD67983.1"/>
    <property type="molecule type" value="Genomic_DNA"/>
</dbReference>
<dbReference type="EMBL" id="CR382125">
    <property type="protein sequence ID" value="CAG99318.1"/>
    <property type="molecule type" value="Genomic_DNA"/>
</dbReference>
<dbReference type="RefSeq" id="XP_454231.1">
    <property type="nucleotide sequence ID" value="XM_454231.1"/>
</dbReference>
<dbReference type="SMR" id="Q874T6"/>
<dbReference type="FunCoup" id="Q874T6">
    <property type="interactions" value="845"/>
</dbReference>
<dbReference type="STRING" id="284590.Q874T6"/>
<dbReference type="PaxDb" id="284590-Q874T6"/>
<dbReference type="KEGG" id="kla:KLLA0_E06293g"/>
<dbReference type="eggNOG" id="KOG0683">
    <property type="taxonomic scope" value="Eukaryota"/>
</dbReference>
<dbReference type="HOGENOM" id="CLU_036762_1_1_1"/>
<dbReference type="InParanoid" id="Q874T6"/>
<dbReference type="OMA" id="DRRPNAN"/>
<dbReference type="Proteomes" id="UP000000598">
    <property type="component" value="Chromosome E"/>
</dbReference>
<dbReference type="GO" id="GO:0005737">
    <property type="term" value="C:cytoplasm"/>
    <property type="evidence" value="ECO:0007669"/>
    <property type="project" value="UniProtKB-SubCell"/>
</dbReference>
<dbReference type="GO" id="GO:0005524">
    <property type="term" value="F:ATP binding"/>
    <property type="evidence" value="ECO:0007669"/>
    <property type="project" value="UniProtKB-KW"/>
</dbReference>
<dbReference type="GO" id="GO:0004356">
    <property type="term" value="F:glutamine synthetase activity"/>
    <property type="evidence" value="ECO:0007669"/>
    <property type="project" value="UniProtKB-EC"/>
</dbReference>
<dbReference type="GO" id="GO:0006542">
    <property type="term" value="P:glutamine biosynthetic process"/>
    <property type="evidence" value="ECO:0007669"/>
    <property type="project" value="InterPro"/>
</dbReference>
<dbReference type="FunFam" id="3.10.20.70:FF:000004">
    <property type="entry name" value="Glutamine synthetase"/>
    <property type="match status" value="1"/>
</dbReference>
<dbReference type="FunFam" id="3.30.590.10:FF:000004">
    <property type="entry name" value="Glutamine synthetase"/>
    <property type="match status" value="1"/>
</dbReference>
<dbReference type="Gene3D" id="3.10.20.70">
    <property type="entry name" value="Glutamine synthetase, N-terminal domain"/>
    <property type="match status" value="1"/>
</dbReference>
<dbReference type="Gene3D" id="3.30.590.10">
    <property type="entry name" value="Glutamine synthetase/guanido kinase, catalytic domain"/>
    <property type="match status" value="1"/>
</dbReference>
<dbReference type="InterPro" id="IPR008147">
    <property type="entry name" value="Gln_synt_N"/>
</dbReference>
<dbReference type="InterPro" id="IPR036651">
    <property type="entry name" value="Gln_synt_N_sf"/>
</dbReference>
<dbReference type="InterPro" id="IPR014746">
    <property type="entry name" value="Gln_synth/guanido_kin_cat_dom"/>
</dbReference>
<dbReference type="InterPro" id="IPR008146">
    <property type="entry name" value="Gln_synth_cat_dom"/>
</dbReference>
<dbReference type="InterPro" id="IPR027303">
    <property type="entry name" value="Gln_synth_gly_rich_site"/>
</dbReference>
<dbReference type="InterPro" id="IPR027302">
    <property type="entry name" value="Gln_synth_N_conserv_site"/>
</dbReference>
<dbReference type="InterPro" id="IPR050292">
    <property type="entry name" value="Glutamine_Synthetase"/>
</dbReference>
<dbReference type="PANTHER" id="PTHR20852">
    <property type="entry name" value="GLUTAMINE SYNTHETASE"/>
    <property type="match status" value="1"/>
</dbReference>
<dbReference type="PANTHER" id="PTHR20852:SF57">
    <property type="entry name" value="GLUTAMINE SYNTHETASE 2 CYTOPLASMIC"/>
    <property type="match status" value="1"/>
</dbReference>
<dbReference type="Pfam" id="PF00120">
    <property type="entry name" value="Gln-synt_C"/>
    <property type="match status" value="1"/>
</dbReference>
<dbReference type="Pfam" id="PF03951">
    <property type="entry name" value="Gln-synt_N"/>
    <property type="match status" value="1"/>
</dbReference>
<dbReference type="SMART" id="SM01230">
    <property type="entry name" value="Gln-synt_C"/>
    <property type="match status" value="1"/>
</dbReference>
<dbReference type="SUPFAM" id="SSF54368">
    <property type="entry name" value="Glutamine synthetase, N-terminal domain"/>
    <property type="match status" value="1"/>
</dbReference>
<dbReference type="SUPFAM" id="SSF55931">
    <property type="entry name" value="Glutamine synthetase/guanido kinase"/>
    <property type="match status" value="1"/>
</dbReference>
<dbReference type="PROSITE" id="PS00180">
    <property type="entry name" value="GLNA_1"/>
    <property type="match status" value="1"/>
</dbReference>
<dbReference type="PROSITE" id="PS00181">
    <property type="entry name" value="GLNA_ATP"/>
    <property type="match status" value="1"/>
</dbReference>
<dbReference type="PROSITE" id="PS51986">
    <property type="entry name" value="GS_BETA_GRASP"/>
    <property type="match status" value="1"/>
</dbReference>
<dbReference type="PROSITE" id="PS51987">
    <property type="entry name" value="GS_CATALYTIC"/>
    <property type="match status" value="1"/>
</dbReference>